<dbReference type="EC" id="2.3.1.-" evidence="7 11"/>
<dbReference type="EMBL" id="AC027134">
    <property type="protein sequence ID" value="AAF99825.1"/>
    <property type="molecule type" value="Genomic_DNA"/>
</dbReference>
<dbReference type="EMBL" id="AC027656">
    <property type="protein sequence ID" value="AAF81284.1"/>
    <property type="molecule type" value="Genomic_DNA"/>
</dbReference>
<dbReference type="EMBL" id="CP002684">
    <property type="protein sequence ID" value="AEE29036.1"/>
    <property type="molecule type" value="Genomic_DNA"/>
</dbReference>
<dbReference type="EMBL" id="CP002684">
    <property type="protein sequence ID" value="AEE29037.1"/>
    <property type="molecule type" value="Genomic_DNA"/>
</dbReference>
<dbReference type="EMBL" id="CP002684">
    <property type="protein sequence ID" value="AEE29038.1"/>
    <property type="molecule type" value="Genomic_DNA"/>
</dbReference>
<dbReference type="EMBL" id="BT010465">
    <property type="protein sequence ID" value="AAQ65088.1"/>
    <property type="molecule type" value="mRNA"/>
</dbReference>
<dbReference type="EMBL" id="AK318872">
    <property type="protein sequence ID" value="BAH56987.1"/>
    <property type="molecule type" value="mRNA"/>
</dbReference>
<dbReference type="PIR" id="H86268">
    <property type="entry name" value="H86268"/>
</dbReference>
<dbReference type="RefSeq" id="NP_001031037.1">
    <molecule id="Q6NQI8-1"/>
    <property type="nucleotide sequence ID" value="NM_001035960.2"/>
</dbReference>
<dbReference type="RefSeq" id="NP_001184985.1">
    <molecule id="Q6NQI8-1"/>
    <property type="nucleotide sequence ID" value="NM_001198056.2"/>
</dbReference>
<dbReference type="RefSeq" id="NP_172815.2">
    <molecule id="Q6NQI8-2"/>
    <property type="nucleotide sequence ID" value="NM_101228.2"/>
</dbReference>
<dbReference type="SMR" id="Q6NQI8"/>
<dbReference type="BioGRID" id="23159">
    <property type="interactions" value="9"/>
</dbReference>
<dbReference type="FunCoup" id="Q6NQI8">
    <property type="interactions" value="4009"/>
</dbReference>
<dbReference type="IntAct" id="Q6NQI8">
    <property type="interactions" value="9"/>
</dbReference>
<dbReference type="STRING" id="3702.Q6NQI8"/>
<dbReference type="iPTMnet" id="Q6NQI8"/>
<dbReference type="PaxDb" id="3702-AT1G13580.3"/>
<dbReference type="ProteomicsDB" id="250716">
    <molecule id="Q6NQI8-1"/>
</dbReference>
<dbReference type="EnsemblPlants" id="AT1G13580.1">
    <molecule id="Q6NQI8-2"/>
    <property type="protein sequence ID" value="AT1G13580.1"/>
    <property type="gene ID" value="AT1G13580"/>
</dbReference>
<dbReference type="EnsemblPlants" id="AT1G13580.2">
    <molecule id="Q6NQI8-1"/>
    <property type="protein sequence ID" value="AT1G13580.2"/>
    <property type="gene ID" value="AT1G13580"/>
</dbReference>
<dbReference type="EnsemblPlants" id="AT1G13580.3">
    <molecule id="Q6NQI8-1"/>
    <property type="protein sequence ID" value="AT1G13580.3"/>
    <property type="gene ID" value="AT1G13580"/>
</dbReference>
<dbReference type="GeneID" id="837919"/>
<dbReference type="Gramene" id="AT1G13580.1">
    <molecule id="Q6NQI8-2"/>
    <property type="protein sequence ID" value="AT1G13580.1"/>
    <property type="gene ID" value="AT1G13580"/>
</dbReference>
<dbReference type="Gramene" id="AT1G13580.2">
    <molecule id="Q6NQI8-1"/>
    <property type="protein sequence ID" value="AT1G13580.2"/>
    <property type="gene ID" value="AT1G13580"/>
</dbReference>
<dbReference type="Gramene" id="AT1G13580.3">
    <molecule id="Q6NQI8-1"/>
    <property type="protein sequence ID" value="AT1G13580.3"/>
    <property type="gene ID" value="AT1G13580"/>
</dbReference>
<dbReference type="KEGG" id="ath:AT1G13580"/>
<dbReference type="Araport" id="AT1G13580"/>
<dbReference type="TAIR" id="AT1G13580">
    <property type="gene designation" value="LAG13"/>
</dbReference>
<dbReference type="eggNOG" id="KOG1607">
    <property type="taxonomic scope" value="Eukaryota"/>
</dbReference>
<dbReference type="HOGENOM" id="CLU_028277_5_0_1"/>
<dbReference type="InParanoid" id="Q6NQI8"/>
<dbReference type="OMA" id="KLYCLLQ"/>
<dbReference type="OrthoDB" id="537032at2759"/>
<dbReference type="PhylomeDB" id="Q6NQI8"/>
<dbReference type="BioCyc" id="MetaCyc:MONOMER-20774"/>
<dbReference type="BRENDA" id="2.3.1.297">
    <property type="organism ID" value="399"/>
</dbReference>
<dbReference type="PRO" id="PR:Q6NQI8"/>
<dbReference type="Proteomes" id="UP000006548">
    <property type="component" value="Chromosome 1"/>
</dbReference>
<dbReference type="ExpressionAtlas" id="Q6NQI8">
    <property type="expression patterns" value="baseline and differential"/>
</dbReference>
<dbReference type="GO" id="GO:0005783">
    <property type="term" value="C:endoplasmic reticulum"/>
    <property type="evidence" value="ECO:0000314"/>
    <property type="project" value="TAIR"/>
</dbReference>
<dbReference type="GO" id="GO:0005789">
    <property type="term" value="C:endoplasmic reticulum membrane"/>
    <property type="evidence" value="ECO:0007669"/>
    <property type="project" value="UniProtKB-SubCell"/>
</dbReference>
<dbReference type="GO" id="GO:0050291">
    <property type="term" value="F:sphingosine N-acyltransferase activity"/>
    <property type="evidence" value="ECO:0000316"/>
    <property type="project" value="TAIR"/>
</dbReference>
<dbReference type="GO" id="GO:0046513">
    <property type="term" value="P:ceramide biosynthetic process"/>
    <property type="evidence" value="ECO:0000314"/>
    <property type="project" value="UniProtKB"/>
</dbReference>
<dbReference type="GO" id="GO:0010256">
    <property type="term" value="P:endomembrane system organization"/>
    <property type="evidence" value="ECO:0000315"/>
    <property type="project" value="UniProtKB"/>
</dbReference>
<dbReference type="GO" id="GO:2000012">
    <property type="term" value="P:regulation of auxin polar transport"/>
    <property type="evidence" value="ECO:0000315"/>
    <property type="project" value="UniProtKB"/>
</dbReference>
<dbReference type="GO" id="GO:0006665">
    <property type="term" value="P:sphingolipid metabolic process"/>
    <property type="evidence" value="ECO:0000314"/>
    <property type="project" value="UniProtKB"/>
</dbReference>
<dbReference type="GO" id="GO:0042761">
    <property type="term" value="P:very long-chain fatty acid biosynthetic process"/>
    <property type="evidence" value="ECO:0000316"/>
    <property type="project" value="TAIR"/>
</dbReference>
<dbReference type="InterPro" id="IPR016439">
    <property type="entry name" value="Lag1/Lac1-like"/>
</dbReference>
<dbReference type="InterPro" id="IPR006634">
    <property type="entry name" value="TLC-dom"/>
</dbReference>
<dbReference type="PANTHER" id="PTHR12560:SF49">
    <property type="entry name" value="CERAMIDE SYNTHASE 1 LOH3"/>
    <property type="match status" value="1"/>
</dbReference>
<dbReference type="PANTHER" id="PTHR12560">
    <property type="entry name" value="LONGEVITY ASSURANCE FACTOR 1 LAG1"/>
    <property type="match status" value="1"/>
</dbReference>
<dbReference type="Pfam" id="PF03798">
    <property type="entry name" value="TRAM_LAG1_CLN8"/>
    <property type="match status" value="1"/>
</dbReference>
<dbReference type="PIRSF" id="PIRSF005225">
    <property type="entry name" value="LAG1_LAC1"/>
    <property type="match status" value="1"/>
</dbReference>
<dbReference type="SMART" id="SM00724">
    <property type="entry name" value="TLC"/>
    <property type="match status" value="1"/>
</dbReference>
<dbReference type="PROSITE" id="PS50922">
    <property type="entry name" value="TLC"/>
    <property type="match status" value="1"/>
</dbReference>
<protein>
    <recommendedName>
        <fullName evidence="17">Ceramide synthase 1 LOH3</fullName>
        <shortName evidence="16">CS1</shortName>
        <shortName evidence="15">CSII</shortName>
        <ecNumber evidence="7 11">2.3.1.-</ecNumber>
    </recommendedName>
    <alternativeName>
        <fullName evidence="18">Protein LONGEVITY ASSURANCE GENE ONE HOMOLOG 3</fullName>
        <shortName evidence="14">LAG One Homolog 3</shortName>
        <shortName evidence="19">LAG1 homolog 3</shortName>
        <shortName evidence="19">LAG1 longevity assurance homolog 3</shortName>
    </alternativeName>
</protein>
<name>LOH3_ARATH</name>
<proteinExistence type="evidence at protein level"/>
<comment type="function">
    <text evidence="3 6 7 9 10 11">Essential for plant growth, promotes cell division in root meristems (PubMed:21666002, PubMed:21883234, PubMed:26276842). Catalyzes the biosynthesis of ceramide sphingolipids with C(16) to C(28) fatty acids, structural membrane lipids involved in membrane trafficking (e.g. early endosomes) and cell polarity (e.g. polar auxin transport related proteins); active on a broad substrate spectrum, both regarding chain lengths of fatty acids and the sphingoid base, such as long-chain base (LCB) phytosphingosine (t18:0) (PubMed:21666002, PubMed:21883234, PubMed:26276842, PubMed:26635357). Mediates resistance to sphinganine-analog mycotoxins (SAMs, e.g. fumonisin B(1)) by restoring the sphingolipid biosynthesis (PubMed:26276842). Could salvage the transport of GPI-anchored proteins from the endoplasmic reticulum to the Golgi apparatus in ceramides-depleted cells after SAM exposure (By similarity). Contributes to hypoxic conditions tolerance (e.g. submergences), especially in the dark, by promoting the formation of very-long-chain (VLC) ceramide species (22:1, 24:1 and 26:1) and of VLC unsaturated ceramides, which are modulating CTR1-mediated ethylene signaling leading to endoplasmic reticulum (ER)-to-nucleus translocation of EIN2 and EIN3 (PubMed:25822663).</text>
</comment>
<comment type="catalytic activity">
    <reaction evidence="6 7 11">
        <text>(4R)-hydroxysphinganine + a fatty acyl-CoA = an N-acyl-(4R)-4-hydroxysphinganine + CoA + H(+)</text>
        <dbReference type="Rhea" id="RHEA:35651"/>
        <dbReference type="ChEBI" id="CHEBI:15378"/>
        <dbReference type="ChEBI" id="CHEBI:31998"/>
        <dbReference type="ChEBI" id="CHEBI:57287"/>
        <dbReference type="ChEBI" id="CHEBI:64124"/>
        <dbReference type="ChEBI" id="CHEBI:77636"/>
    </reaction>
    <physiologicalReaction direction="left-to-right" evidence="6 7 11">
        <dbReference type="Rhea" id="RHEA:35652"/>
    </physiologicalReaction>
</comment>
<comment type="catalytic activity">
    <reaction evidence="6 7 11">
        <text>a sphingoid base + tetracosanoyl-CoA = an N-tetracosanoyl-sphingoid base + CoA + H(+)</text>
        <dbReference type="Rhea" id="RHEA:65632"/>
        <dbReference type="ChEBI" id="CHEBI:15378"/>
        <dbReference type="ChEBI" id="CHEBI:57287"/>
        <dbReference type="ChEBI" id="CHEBI:65052"/>
        <dbReference type="ChEBI" id="CHEBI:84410"/>
        <dbReference type="ChEBI" id="CHEBI:157596"/>
    </reaction>
    <physiologicalReaction direction="left-to-right" evidence="6 7 11">
        <dbReference type="Rhea" id="RHEA:65633"/>
    </physiologicalReaction>
</comment>
<comment type="catalytic activity">
    <reaction evidence="6 7 11">
        <text>(4R)-hydroxysphinganine + hexadecanoyl-CoA = N-hexadecanoyl-(4R)-hydroxysphinganine + CoA + H(+)</text>
        <dbReference type="Rhea" id="RHEA:64008"/>
        <dbReference type="ChEBI" id="CHEBI:15378"/>
        <dbReference type="ChEBI" id="CHEBI:57287"/>
        <dbReference type="ChEBI" id="CHEBI:57379"/>
        <dbReference type="ChEBI" id="CHEBI:64124"/>
        <dbReference type="ChEBI" id="CHEBI:65107"/>
    </reaction>
    <physiologicalReaction direction="left-to-right" evidence="6 7 11">
        <dbReference type="Rhea" id="RHEA:64009"/>
    </physiologicalReaction>
</comment>
<comment type="catalytic activity">
    <reaction evidence="6 7 11">
        <text>(4R)-hydroxysphinganine + octadecanoyl-CoA = N-octadecanoyl-(4R)-hydroxysphinganine + CoA + H(+)</text>
        <dbReference type="Rhea" id="RHEA:64000"/>
        <dbReference type="ChEBI" id="CHEBI:15378"/>
        <dbReference type="ChEBI" id="CHEBI:57287"/>
        <dbReference type="ChEBI" id="CHEBI:57394"/>
        <dbReference type="ChEBI" id="CHEBI:64124"/>
        <dbReference type="ChEBI" id="CHEBI:67035"/>
    </reaction>
    <physiologicalReaction direction="left-to-right" evidence="6 7 11">
        <dbReference type="Rhea" id="RHEA:64001"/>
    </physiologicalReaction>
</comment>
<comment type="catalytic activity">
    <reaction evidence="6 7 11">
        <text>(4R)-hydroxysphinganine + eicosanoyl-CoA = N-eicosanoyl-(4R)-hydroxysphinganine + CoA + H(+)</text>
        <dbReference type="Rhea" id="RHEA:65604"/>
        <dbReference type="ChEBI" id="CHEBI:15378"/>
        <dbReference type="ChEBI" id="CHEBI:57287"/>
        <dbReference type="ChEBI" id="CHEBI:57380"/>
        <dbReference type="ChEBI" id="CHEBI:64124"/>
        <dbReference type="ChEBI" id="CHEBI:67029"/>
    </reaction>
    <physiologicalReaction direction="left-to-right" evidence="6 7 11">
        <dbReference type="Rhea" id="RHEA:65605"/>
    </physiologicalReaction>
</comment>
<comment type="catalytic activity">
    <reaction evidence="6 7 11">
        <text>docosanoyl-CoA + (4R)-hydroxysphinganine = N-docosanoyl-(4R)-hydroxysphinganine + CoA + H(+)</text>
        <dbReference type="Rhea" id="RHEA:65608"/>
        <dbReference type="ChEBI" id="CHEBI:15378"/>
        <dbReference type="ChEBI" id="CHEBI:57287"/>
        <dbReference type="ChEBI" id="CHEBI:64124"/>
        <dbReference type="ChEBI" id="CHEBI:65059"/>
        <dbReference type="ChEBI" id="CHEBI:67024"/>
    </reaction>
    <physiologicalReaction direction="left-to-right" evidence="6 7 11">
        <dbReference type="Rhea" id="RHEA:65609"/>
    </physiologicalReaction>
</comment>
<comment type="catalytic activity">
    <reaction evidence="6 7 11">
        <text>hexacosanoyl-CoA + (4R)-hydroxysphinganine = N-hexacosanoyl-(4R)-hydroxysphinganine + CoA + H(+)</text>
        <dbReference type="Rhea" id="RHEA:33339"/>
        <dbReference type="ChEBI" id="CHEBI:15378"/>
        <dbReference type="ChEBI" id="CHEBI:52980"/>
        <dbReference type="ChEBI" id="CHEBI:57287"/>
        <dbReference type="ChEBI" id="CHEBI:64124"/>
        <dbReference type="ChEBI" id="CHEBI:64868"/>
    </reaction>
    <physiologicalReaction direction="left-to-right" evidence="6 7 11">
        <dbReference type="Rhea" id="RHEA:33340"/>
    </physiologicalReaction>
</comment>
<comment type="catalytic activity">
    <reaction evidence="6 7 11">
        <text>tetracosanoyl-CoA + (4R)-hydroxysphinganine = N-tetracosanoyl-(4R)-hydroxysphinganine + CoA + H(+)</text>
        <dbReference type="Rhea" id="RHEA:33595"/>
        <dbReference type="ChEBI" id="CHEBI:15378"/>
        <dbReference type="ChEBI" id="CHEBI:52979"/>
        <dbReference type="ChEBI" id="CHEBI:57287"/>
        <dbReference type="ChEBI" id="CHEBI:64124"/>
        <dbReference type="ChEBI" id="CHEBI:65052"/>
    </reaction>
    <physiologicalReaction direction="left-to-right" evidence="6 7 11">
        <dbReference type="Rhea" id="RHEA:33596"/>
    </physiologicalReaction>
</comment>
<comment type="catalytic activity">
    <reaction evidence="6 7 11">
        <text>tetracosanoyl-CoA + sphing-4-enine = N-tetracosanoyl-sphing-4-enine + CoA + H(+)</text>
        <dbReference type="Rhea" id="RHEA:37115"/>
        <dbReference type="ChEBI" id="CHEBI:15378"/>
        <dbReference type="ChEBI" id="CHEBI:57287"/>
        <dbReference type="ChEBI" id="CHEBI:57756"/>
        <dbReference type="ChEBI" id="CHEBI:65052"/>
        <dbReference type="ChEBI" id="CHEBI:72965"/>
    </reaction>
    <physiologicalReaction direction="left-to-right" evidence="6 7 11">
        <dbReference type="Rhea" id="RHEA:37116"/>
    </physiologicalReaction>
</comment>
<comment type="catalytic activity">
    <reaction evidence="6 7 11">
        <text>sphinga-(4E,8Z)-dienine + tetracosanoyl-CoA = N-tetracosanoylsphinga-(4E,8Z)-dienine + CoA + H(+)</text>
        <dbReference type="Rhea" id="RHEA:65628"/>
        <dbReference type="ChEBI" id="CHEBI:15378"/>
        <dbReference type="ChEBI" id="CHEBI:57287"/>
        <dbReference type="ChEBI" id="CHEBI:65052"/>
        <dbReference type="ChEBI" id="CHEBI:157606"/>
        <dbReference type="ChEBI" id="CHEBI:157626"/>
    </reaction>
    <physiologicalReaction direction="left-to-right" evidence="6 7 11">
        <dbReference type="Rhea" id="RHEA:65629"/>
    </physiologicalReaction>
</comment>
<comment type="catalytic activity">
    <reaction evidence="6 7 11">
        <text>sphinga-(4E,8E)-dienine + tetracosanoyl-CoA = N-tetracosanoylsphinga-(4E,8E)-dienine + CoA + H(+)</text>
        <dbReference type="Rhea" id="RHEA:65636"/>
        <dbReference type="ChEBI" id="CHEBI:15378"/>
        <dbReference type="ChEBI" id="CHEBI:57287"/>
        <dbReference type="ChEBI" id="CHEBI:65052"/>
        <dbReference type="ChEBI" id="CHEBI:72758"/>
        <dbReference type="ChEBI" id="CHEBI:157628"/>
    </reaction>
    <physiologicalReaction direction="left-to-right" evidence="6 7 11">
        <dbReference type="Rhea" id="RHEA:65637"/>
    </physiologicalReaction>
</comment>
<comment type="catalytic activity">
    <reaction evidence="6 7 11">
        <text>(4R)-hydroxysphing-(8Z)-enine + tetracosanoyl-CoA = N-tetracosanoyl-(4R)-hydroxysphing-(8Z)-enine + CoA + H(+)</text>
        <dbReference type="Rhea" id="RHEA:65640"/>
        <dbReference type="ChEBI" id="CHEBI:15378"/>
        <dbReference type="ChEBI" id="CHEBI:57287"/>
        <dbReference type="ChEBI" id="CHEBI:65052"/>
        <dbReference type="ChEBI" id="CHEBI:157607"/>
        <dbReference type="ChEBI" id="CHEBI:157621"/>
    </reaction>
    <physiologicalReaction direction="left-to-right" evidence="6 7 11">
        <dbReference type="Rhea" id="RHEA:65641"/>
    </physiologicalReaction>
</comment>
<comment type="catalytic activity">
    <reaction evidence="6 7 11">
        <text>(4R)-hydroxysphing-(8E)-enine + tetracosanoyl-CoA = N-tetracosanoyl-(4R)-hydroxysphing-(8E)-enine + CoA + H(+)</text>
        <dbReference type="Rhea" id="RHEA:65644"/>
        <dbReference type="ChEBI" id="CHEBI:15378"/>
        <dbReference type="ChEBI" id="CHEBI:57287"/>
        <dbReference type="ChEBI" id="CHEBI:65052"/>
        <dbReference type="ChEBI" id="CHEBI:83175"/>
        <dbReference type="ChEBI" id="CHEBI:157620"/>
    </reaction>
    <physiologicalReaction direction="left-to-right" evidence="6 7 11">
        <dbReference type="Rhea" id="RHEA:65645"/>
    </physiologicalReaction>
</comment>
<comment type="activity regulation">
    <text evidence="10 11">Inhibited by the mycotoxin fumonisin B(1), a sphingosine analog mycotoxins produced by pathogenic fungi (PubMed:26276842, PubMed:26635357). Repressed by divalent cation such as magnesium Mg(2+), copper Cu(2+), zinc Zn(2+), manganese Mn(2+), calcium Ca(2+) and cobalt Co(2+) (PubMed:26635357).</text>
</comment>
<comment type="biophysicochemical properties">
    <kinetics>
        <KM evidence="11">23 uM for phytosphingosine (t18:0)</KM>
        <Vmax evidence="11">395.0 pmol/min/mg enzyme with phytosphingosine (t18:0) as substrate</Vmax>
    </kinetics>
</comment>
<comment type="pathway">
    <text evidence="6 7 11">Sphingolipid metabolism.</text>
</comment>
<comment type="subcellular location">
    <subcellularLocation>
        <location evidence="1">Endoplasmic reticulum membrane</location>
        <topology evidence="4">Multi-pass membrane protein</topology>
    </subcellularLocation>
</comment>
<comment type="alternative products">
    <event type="alternative splicing"/>
    <isoform>
        <id>Q6NQI8-1</id>
        <name>1</name>
        <sequence type="displayed"/>
    </isoform>
    <isoform>
        <id>Q6NQI8-2</id>
        <name>2</name>
        <sequence type="described" ref="VSP_013449 VSP_013450"/>
    </isoform>
</comment>
<comment type="tissue specificity">
    <text evidence="7 8">Expressed ubiquitously at low levels (PubMed:21883234). Not observed in pollen (PubMed:25794895).</text>
</comment>
<comment type="disruption phenotype">
    <text evidence="6 7 9">No visible impact on ceramide and glucosylceramide species with C(14) to C(28) fatty acids (PubMed:21883234). The double mutant loh1 loh3 is embryonically lethal (PubMed:21666002, PubMed:21883234). Rare viable loh1 loh3 seedlings have a complete absence of very-long-chain fatty acid (VLCFA) in sphingolipids and exhibit strong dwarf phenotype and altered lateral root outgrowth associated with disrupted early endosomes and an impaired polar auxin transport due to abnormal localization of auxin transporters in the plasma membrane; these phenotypes are in part restored by external auxin (NAA) (PubMed:21666002). Better resistance to submergence under light conditions, but increased sensitivity to dark submergence associated with declined levels of unsaturated very-long-chain (VLC) ceramide species (22:1, 24:1 and 26:1) (PubMed:25822663). The double mutant loh1 loh3, lacking (VLC) ceramides, have an impaired tolerance to both dark and light submergences (PubMed:25822663).</text>
</comment>
<comment type="miscellaneous">
    <molecule>Isoform 2</molecule>
    <text evidence="19">May be due to intron retention.</text>
</comment>
<organism>
    <name type="scientific">Arabidopsis thaliana</name>
    <name type="common">Mouse-ear cress</name>
    <dbReference type="NCBI Taxonomy" id="3702"/>
    <lineage>
        <taxon>Eukaryota</taxon>
        <taxon>Viridiplantae</taxon>
        <taxon>Streptophyta</taxon>
        <taxon>Embryophyta</taxon>
        <taxon>Tracheophyta</taxon>
        <taxon>Spermatophyta</taxon>
        <taxon>Magnoliopsida</taxon>
        <taxon>eudicotyledons</taxon>
        <taxon>Gunneridae</taxon>
        <taxon>Pentapetalae</taxon>
        <taxon>rosids</taxon>
        <taxon>malvids</taxon>
        <taxon>Brassicales</taxon>
        <taxon>Brassicaceae</taxon>
        <taxon>Camelineae</taxon>
        <taxon>Arabidopsis</taxon>
    </lineage>
</organism>
<reference key="1">
    <citation type="journal article" date="2000" name="Nature">
        <title>Sequence and analysis of chromosome 1 of the plant Arabidopsis thaliana.</title>
        <authorList>
            <person name="Theologis A."/>
            <person name="Ecker J.R."/>
            <person name="Palm C.J."/>
            <person name="Federspiel N.A."/>
            <person name="Kaul S."/>
            <person name="White O."/>
            <person name="Alonso J."/>
            <person name="Altafi H."/>
            <person name="Araujo R."/>
            <person name="Bowman C.L."/>
            <person name="Brooks S.Y."/>
            <person name="Buehler E."/>
            <person name="Chan A."/>
            <person name="Chao Q."/>
            <person name="Chen H."/>
            <person name="Cheuk R.F."/>
            <person name="Chin C.W."/>
            <person name="Chung M.K."/>
            <person name="Conn L."/>
            <person name="Conway A.B."/>
            <person name="Conway A.R."/>
            <person name="Creasy T.H."/>
            <person name="Dewar K."/>
            <person name="Dunn P."/>
            <person name="Etgu P."/>
            <person name="Feldblyum T.V."/>
            <person name="Feng J.-D."/>
            <person name="Fong B."/>
            <person name="Fujii C.Y."/>
            <person name="Gill J.E."/>
            <person name="Goldsmith A.D."/>
            <person name="Haas B."/>
            <person name="Hansen N.F."/>
            <person name="Hughes B."/>
            <person name="Huizar L."/>
            <person name="Hunter J.L."/>
            <person name="Jenkins J."/>
            <person name="Johnson-Hopson C."/>
            <person name="Khan S."/>
            <person name="Khaykin E."/>
            <person name="Kim C.J."/>
            <person name="Koo H.L."/>
            <person name="Kremenetskaia I."/>
            <person name="Kurtz D.B."/>
            <person name="Kwan A."/>
            <person name="Lam B."/>
            <person name="Langin-Hooper S."/>
            <person name="Lee A."/>
            <person name="Lee J.M."/>
            <person name="Lenz C.A."/>
            <person name="Li J.H."/>
            <person name="Li Y.-P."/>
            <person name="Lin X."/>
            <person name="Liu S.X."/>
            <person name="Liu Z.A."/>
            <person name="Luros J.S."/>
            <person name="Maiti R."/>
            <person name="Marziali A."/>
            <person name="Militscher J."/>
            <person name="Miranda M."/>
            <person name="Nguyen M."/>
            <person name="Nierman W.C."/>
            <person name="Osborne B.I."/>
            <person name="Pai G."/>
            <person name="Peterson J."/>
            <person name="Pham P.K."/>
            <person name="Rizzo M."/>
            <person name="Rooney T."/>
            <person name="Rowley D."/>
            <person name="Sakano H."/>
            <person name="Salzberg S.L."/>
            <person name="Schwartz J.R."/>
            <person name="Shinn P."/>
            <person name="Southwick A.M."/>
            <person name="Sun H."/>
            <person name="Tallon L.J."/>
            <person name="Tambunga G."/>
            <person name="Toriumi M.J."/>
            <person name="Town C.D."/>
            <person name="Utterback T."/>
            <person name="Van Aken S."/>
            <person name="Vaysberg M."/>
            <person name="Vysotskaia V.S."/>
            <person name="Walker M."/>
            <person name="Wu D."/>
            <person name="Yu G."/>
            <person name="Fraser C.M."/>
            <person name="Venter J.C."/>
            <person name="Davis R.W."/>
        </authorList>
    </citation>
    <scope>NUCLEOTIDE SEQUENCE [LARGE SCALE GENOMIC DNA]</scope>
    <source>
        <strain>cv. Columbia</strain>
    </source>
</reference>
<reference key="2">
    <citation type="journal article" date="2017" name="Plant J.">
        <title>Araport11: a complete reannotation of the Arabidopsis thaliana reference genome.</title>
        <authorList>
            <person name="Cheng C.Y."/>
            <person name="Krishnakumar V."/>
            <person name="Chan A.P."/>
            <person name="Thibaud-Nissen F."/>
            <person name="Schobel S."/>
            <person name="Town C.D."/>
        </authorList>
    </citation>
    <scope>GENOME REANNOTATION</scope>
    <source>
        <strain>cv. Columbia</strain>
    </source>
</reference>
<reference key="3">
    <citation type="journal article" date="2003" name="Science">
        <title>Empirical analysis of transcriptional activity in the Arabidopsis genome.</title>
        <authorList>
            <person name="Yamada K."/>
            <person name="Lim J."/>
            <person name="Dale J.M."/>
            <person name="Chen H."/>
            <person name="Shinn P."/>
            <person name="Palm C.J."/>
            <person name="Southwick A.M."/>
            <person name="Wu H.C."/>
            <person name="Kim C.J."/>
            <person name="Nguyen M."/>
            <person name="Pham P.K."/>
            <person name="Cheuk R.F."/>
            <person name="Karlin-Newmann G."/>
            <person name="Liu S.X."/>
            <person name="Lam B."/>
            <person name="Sakano H."/>
            <person name="Wu T."/>
            <person name="Yu G."/>
            <person name="Miranda M."/>
            <person name="Quach H.L."/>
            <person name="Tripp M."/>
            <person name="Chang C.H."/>
            <person name="Lee J.M."/>
            <person name="Toriumi M.J."/>
            <person name="Chan M.M."/>
            <person name="Tang C.C."/>
            <person name="Onodera C.S."/>
            <person name="Deng J.M."/>
            <person name="Akiyama K."/>
            <person name="Ansari Y."/>
            <person name="Arakawa T."/>
            <person name="Banh J."/>
            <person name="Banno F."/>
            <person name="Bowser L."/>
            <person name="Brooks S.Y."/>
            <person name="Carninci P."/>
            <person name="Chao Q."/>
            <person name="Choy N."/>
            <person name="Enju A."/>
            <person name="Goldsmith A.D."/>
            <person name="Gurjal M."/>
            <person name="Hansen N.F."/>
            <person name="Hayashizaki Y."/>
            <person name="Johnson-Hopson C."/>
            <person name="Hsuan V.W."/>
            <person name="Iida K."/>
            <person name="Karnes M."/>
            <person name="Khan S."/>
            <person name="Koesema E."/>
            <person name="Ishida J."/>
            <person name="Jiang P.X."/>
            <person name="Jones T."/>
            <person name="Kawai J."/>
            <person name="Kamiya A."/>
            <person name="Meyers C."/>
            <person name="Nakajima M."/>
            <person name="Narusaka M."/>
            <person name="Seki M."/>
            <person name="Sakurai T."/>
            <person name="Satou M."/>
            <person name="Tamse R."/>
            <person name="Vaysberg M."/>
            <person name="Wallender E.K."/>
            <person name="Wong C."/>
            <person name="Yamamura Y."/>
            <person name="Yuan S."/>
            <person name="Shinozaki K."/>
            <person name="Davis R.W."/>
            <person name="Theologis A."/>
            <person name="Ecker J.R."/>
        </authorList>
    </citation>
    <scope>NUCLEOTIDE SEQUENCE [LARGE SCALE MRNA] (ISOFORM 2)</scope>
    <source>
        <strain>cv. Columbia</strain>
    </source>
</reference>
<reference key="4">
    <citation type="journal article" date="2009" name="DNA Res.">
        <title>Analysis of multiple occurrences of alternative splicing events in Arabidopsis thaliana using novel sequenced full-length cDNAs.</title>
        <authorList>
            <person name="Iida K."/>
            <person name="Fukami-Kobayashi K."/>
            <person name="Toyoda A."/>
            <person name="Sakaki Y."/>
            <person name="Kobayashi M."/>
            <person name="Seki M."/>
            <person name="Shinozaki K."/>
        </authorList>
    </citation>
    <scope>NUCLEOTIDE SEQUENCE [LARGE SCALE MRNA] (ISOFORM 1)</scope>
    <source>
        <strain>cv. Columbia</strain>
        <tissue>Root</tissue>
    </source>
</reference>
<reference key="5">
    <citation type="journal article" date="2004" name="Ann. Bot.">
        <title>A post-genomic approach to understanding sphingolipid metabolism in Arabidopsis thaliana.</title>
        <authorList>
            <person name="Dunn T.M."/>
            <person name="Lynch D.V."/>
            <person name="Michaelson L.V."/>
            <person name="Napier J.A."/>
        </authorList>
    </citation>
    <scope>REVIEW</scope>
</reference>
<reference key="6">
    <citation type="journal article" date="2011" name="New Phytol.">
        <title>Disruption of the ceramide synthase LOH1 causes spontaneous cell death in Arabidopsis thaliana.</title>
        <authorList>
            <person name="Ternes P."/>
            <person name="Feussner K."/>
            <person name="Werner S."/>
            <person name="Lerche J."/>
            <person name="Iven T."/>
            <person name="Heilmann I."/>
            <person name="Riezman H."/>
            <person name="Feussner I."/>
        </authorList>
    </citation>
    <scope>FUNCTION</scope>
    <scope>DISRUPTION PHENOTYPE</scope>
    <scope>TISSUE SPECIFICITY</scope>
    <scope>CATALYTIC ACTIVITY</scope>
    <scope>PATHWAY</scope>
    <source>
        <strain>cv. Columbia</strain>
    </source>
</reference>
<reference key="7">
    <citation type="journal article" date="2011" name="Plant Cell">
        <title>Sphingolipids containing very-long-chain fatty acids define a secretory pathway for specific polar plasma membrane protein targeting in Arabidopsis.</title>
        <authorList>
            <person name="Markham J.E."/>
            <person name="Molino D."/>
            <person name="Gissot L."/>
            <person name="Bellec Y."/>
            <person name="Hematy K."/>
            <person name="Marion J."/>
            <person name="Belcram K."/>
            <person name="Palauqui J.-C."/>
            <person name="Satiat-Jeunemaitre B."/>
            <person name="Faure J.-D."/>
        </authorList>
    </citation>
    <scope>FUNCTION</scope>
    <scope>DISRUPTION PHENOTYPE</scope>
    <scope>CATALYTIC ACTIVITY</scope>
    <scope>PATHWAY</scope>
    <source>
        <strain>cv. Columbia</strain>
    </source>
</reference>
<reference key="8">
    <citation type="journal article" date="2013" name="Arabidopsis Book">
        <title>Acyl-lipid metabolism.</title>
        <authorList>
            <person name="Li-Beisson Y."/>
            <person name="Shorrosh B."/>
            <person name="Beisson F."/>
            <person name="Andersson M.X."/>
            <person name="Arondel V."/>
            <person name="Bates P.D."/>
            <person name="Baud S."/>
            <person name="Bird D."/>
            <person name="Debono A."/>
            <person name="Durrett T.P."/>
            <person name="Franke R.B."/>
            <person name="Graham I.A."/>
            <person name="Katayama K."/>
            <person name="Kelly A.A."/>
            <person name="Larson T."/>
            <person name="Markham J.E."/>
            <person name="Miquel M."/>
            <person name="Molina I."/>
            <person name="Nishida I."/>
            <person name="Rowland O."/>
            <person name="Samuels L."/>
            <person name="Schmid K.M."/>
            <person name="Wada H."/>
            <person name="Welti R."/>
            <person name="Xu C."/>
            <person name="Zallot R."/>
            <person name="Ohlrogge J."/>
        </authorList>
    </citation>
    <scope>REVIEW ON SPHINGOLIPIDS</scope>
</reference>
<reference key="9">
    <citation type="journal article" date="2013" name="Curr. Opin. Plant Biol.">
        <title>Plant sphingolipids: function follows form.</title>
        <authorList>
            <person name="Markham J.E."/>
            <person name="Lynch D.V."/>
            <person name="Napier J.A."/>
            <person name="Dunn T.M."/>
            <person name="Cahoon E.B."/>
        </authorList>
    </citation>
    <scope>REVIEW ON SPHINGOLIPIDS</scope>
</reference>
<reference key="10">
    <citation type="journal article" date="2015" name="Phytochemistry">
        <title>Sphingolipid metabolism is strikingly different between pollen and leaf in Arabidopsis as revealed by compositional and gene expression profiling.</title>
        <authorList>
            <person name="Luttgeharm K.D."/>
            <person name="Kimberlin A.N."/>
            <person name="Cahoon R.E."/>
            <person name="Cerny R.L."/>
            <person name="Napier J.A."/>
            <person name="Markham J.E."/>
            <person name="Cahoon E.B."/>
        </authorList>
    </citation>
    <scope>TISSUE SPECIFICITY</scope>
    <source>
        <strain>cv. Columbia</strain>
    </source>
</reference>
<reference key="11">
    <citation type="journal article" date="2015" name="Plant Physiol.">
        <title>Overexpression of Arabidopsis ceramide synthases differentially affects growth, sphingolipid metabolism, programmed cell death, and mycotoxin resistance.</title>
        <authorList>
            <person name="Luttgeharm K.D."/>
            <person name="Chen M."/>
            <person name="Mehra A."/>
            <person name="Cahoon R.E."/>
            <person name="Markham J.E."/>
            <person name="Cahoon E.B."/>
        </authorList>
    </citation>
    <scope>FUNCTION</scope>
    <scope>ACTIVITY REGULATION</scope>
    <source>
        <strain>cv. Columbia</strain>
    </source>
</reference>
<reference key="12">
    <citation type="journal article" date="2015" name="PLoS Genet.">
        <title>Unsaturation of very-long-chain ceramides protects plant from hypoxia-induced damages by modulating ethylene signaling in Arabidopsis.</title>
        <authorList>
            <person name="Xie L.-J."/>
            <person name="Chen Q.-F."/>
            <person name="Chen M.-X."/>
            <person name="Yu L.-J."/>
            <person name="Huang L."/>
            <person name="Chen L."/>
            <person name="Wang F.-Z."/>
            <person name="Xia F.-N."/>
            <person name="Zhu T.-R."/>
            <person name="Wu J.-X."/>
            <person name="Yin J."/>
            <person name="Liao B."/>
            <person name="Shi J."/>
            <person name="Zhang J.-H."/>
            <person name="Aharoni A."/>
            <person name="Yao N."/>
            <person name="Shu W."/>
            <person name="Xiao S."/>
        </authorList>
    </citation>
    <scope>FUNCTION</scope>
    <scope>DISRUPTION PHENOTYPE</scope>
    <source>
        <strain>cv. Columbia</strain>
    </source>
</reference>
<reference key="13">
    <citation type="journal article" date="2016" name="Biochem. J.">
        <title>Substrate specificity, kinetic properties and inhibition by fumonisin B1 of ceramide synthase isoforms from Arabidopsis.</title>
        <authorList>
            <person name="Luttgeharm K.D."/>
            <person name="Cahoon E.B."/>
            <person name="Markham J.E."/>
        </authorList>
    </citation>
    <scope>FUNCTION</scope>
    <scope>CATALYTIC ACTIVITY</scope>
    <scope>ACTIVITY REGULATION</scope>
    <scope>BIOPHYSICOCHEMICAL PROPERTIES</scope>
    <scope>PATHWAY</scope>
</reference>
<reference key="14">
    <citation type="journal article" date="2020" name="Trends Plant Sci.">
        <title>Synthesis and function of complex sphingolipid glycosylation.</title>
        <authorList>
            <person name="Mortimer J.C."/>
            <person name="Scheller H.V."/>
        </authorList>
    </citation>
    <scope>REVIEW</scope>
</reference>
<accession>Q6NQI8</accession>
<accession>C0Z2Q8</accession>
<accession>Q9FZ69</accession>
<accession>Q9LMZ0</accession>
<gene>
    <name evidence="14 17" type="primary">LOH3</name>
    <name evidence="13" type="synonym">LAC1</name>
    <name evidence="20" type="ordered locus">At1g13580</name>
    <name evidence="22" type="ORF">F13B4.7</name>
    <name evidence="21" type="ORF">F21F23.1</name>
</gene>
<feature type="chain" id="PRO_0000185520" description="Ceramide synthase 1 LOH3">
    <location>
        <begin position="1"/>
        <end position="308"/>
    </location>
</feature>
<feature type="transmembrane region" description="Helical" evidence="4">
    <location>
        <begin position="25"/>
        <end position="45"/>
    </location>
</feature>
<feature type="transmembrane region" description="Helical" evidence="4">
    <location>
        <begin position="82"/>
        <end position="102"/>
    </location>
</feature>
<feature type="transmembrane region" description="Helical" evidence="4">
    <location>
        <begin position="128"/>
        <end position="148"/>
    </location>
</feature>
<feature type="transmembrane region" description="Helical" evidence="4">
    <location>
        <begin position="154"/>
        <end position="174"/>
    </location>
</feature>
<feature type="transmembrane region" description="Helical" evidence="4">
    <location>
        <begin position="213"/>
        <end position="233"/>
    </location>
</feature>
<feature type="transmembrane region" description="Helical" evidence="4">
    <location>
        <begin position="258"/>
        <end position="278"/>
    </location>
</feature>
<feature type="domain" description="TLC" evidence="5">
    <location>
        <begin position="73"/>
        <end position="287"/>
    </location>
</feature>
<feature type="modified residue" description="Phosphoserine" evidence="2">
    <location>
        <position position="298"/>
    </location>
</feature>
<feature type="modified residue" description="Phosphoserine" evidence="2">
    <location>
        <position position="300"/>
    </location>
</feature>
<feature type="splice variant" id="VSP_013449" description="In isoform 2." evidence="12">
    <original>SYE</original>
    <variation>RFV</variation>
    <location>
        <begin position="237"/>
        <end position="239"/>
    </location>
</feature>
<feature type="splice variant" id="VSP_013450" description="In isoform 2." evidence="12">
    <location>
        <begin position="240"/>
        <end position="308"/>
    </location>
</feature>
<feature type="sequence conflict" description="In Ref. 4; BAH56987." evidence="19" ref="4">
    <original>S</original>
    <variation>G</variation>
    <location>
        <position position="175"/>
    </location>
</feature>
<sequence>MGLLESVKSINWEHESSPVYQDFRVLPLFAVFFPSIRFLLDRFVFEKLAKYLIYGKHRQDMGDDTTERKKKIRKFKESAWKCVYYLSAEILALSVTYNEPWFMNTKYFWVGPGDQTWPDQQTKLKLKLLYMFVAGFYTYSIFALVFWETRRSDFGVSMGHHIATLILIVLSYVCSFSRVGSVVLALHDASDVFLEVGKMSKYSGAERIASFSFILFVLSWIILRLIYYPFWILWSTSYEVVLELDKDKHPIEGPIYYYMFNTLLYCLLVLHIYWWVLMYRMLVKQIQDRGKLSEDVRSDSEGEDEHED</sequence>
<keyword id="KW-0025">Alternative splicing</keyword>
<keyword id="KW-0256">Endoplasmic reticulum</keyword>
<keyword id="KW-0444">Lipid biosynthesis</keyword>
<keyword id="KW-0443">Lipid metabolism</keyword>
<keyword id="KW-0472">Membrane</keyword>
<keyword id="KW-0597">Phosphoprotein</keyword>
<keyword id="KW-1185">Reference proteome</keyword>
<keyword id="KW-0808">Transferase</keyword>
<keyword id="KW-0812">Transmembrane</keyword>
<keyword id="KW-1133">Transmembrane helix</keyword>
<evidence type="ECO:0000250" key="1">
    <source>
        <dbReference type="UniProtKB" id="Q8C172"/>
    </source>
</evidence>
<evidence type="ECO:0000250" key="2">
    <source>
        <dbReference type="UniProtKB" id="Q9LJK3"/>
    </source>
</evidence>
<evidence type="ECO:0000250" key="3">
    <source>
        <dbReference type="UniProtKB" id="Q9M6A3"/>
    </source>
</evidence>
<evidence type="ECO:0000255" key="4"/>
<evidence type="ECO:0000255" key="5">
    <source>
        <dbReference type="PROSITE-ProRule" id="PRU00205"/>
    </source>
</evidence>
<evidence type="ECO:0000269" key="6">
    <source>
    </source>
</evidence>
<evidence type="ECO:0000269" key="7">
    <source>
    </source>
</evidence>
<evidence type="ECO:0000269" key="8">
    <source>
    </source>
</evidence>
<evidence type="ECO:0000269" key="9">
    <source>
    </source>
</evidence>
<evidence type="ECO:0000269" key="10">
    <source>
    </source>
</evidence>
<evidence type="ECO:0000269" key="11">
    <source>
    </source>
</evidence>
<evidence type="ECO:0000303" key="12">
    <source>
    </source>
</evidence>
<evidence type="ECO:0000303" key="13">
    <source>
    </source>
</evidence>
<evidence type="ECO:0000303" key="14">
    <source>
    </source>
</evidence>
<evidence type="ECO:0000303" key="15">
    <source>
    </source>
</evidence>
<evidence type="ECO:0000303" key="16">
    <source>
    </source>
</evidence>
<evidence type="ECO:0000303" key="17">
    <source>
    </source>
</evidence>
<evidence type="ECO:0000303" key="18">
    <source>
    </source>
</evidence>
<evidence type="ECO:0000305" key="19"/>
<evidence type="ECO:0000312" key="20">
    <source>
        <dbReference type="Araport" id="AT1G13580"/>
    </source>
</evidence>
<evidence type="ECO:0000312" key="21">
    <source>
        <dbReference type="EMBL" id="AAF81284.1"/>
    </source>
</evidence>
<evidence type="ECO:0000312" key="22">
    <source>
        <dbReference type="EMBL" id="AAF99825.1"/>
    </source>
</evidence>